<name>SEC65_DEBHA</name>
<evidence type="ECO:0000250" key="1"/>
<evidence type="ECO:0000256" key="2">
    <source>
        <dbReference type="SAM" id="MobiDB-lite"/>
    </source>
</evidence>
<evidence type="ECO:0000305" key="3"/>
<sequence length="269" mass="30435">MAKRPVLEDVLDDEIDNMDMDIAQFDPSLRTPIAPVQPGPQITRSQDQEPPLFPNFPHPEQDKSVERKDIVDPNKFSAEERAELKKFQIIYPCYFDKSRSHKDGRRVSESKAVSNPLAKTISDACRHYNLPVMLELDKTHPQDFGNPGRVRVLIKDNNKNGMPVDSRFKTKRAVLNIIADYLKTHPTTLASIGPKSGIPLPSEYETGFEPGEIPKVKGFKMNTIVPVHSELTIKHPMTKSIYDPEPEQPQVKAPQAPKQPKKKVMKIRG</sequence>
<comment type="function">
    <text evidence="1">Signal-recognition-particle assembly has a crucial role in targeting secretory proteins to the rough endoplasmic reticulum membrane. It must be involved intimately in the translocation of a wide variety of protein substrates (By similarity).</text>
</comment>
<comment type="subunit">
    <text evidence="1">Fungal signal recognition particle consists of a 7S RNA molecule (scR1) and at least six protein subunits: SRP72, SRP68, SRP54, SEC65, SRP21 andSRP14.</text>
</comment>
<comment type="subcellular location">
    <subcellularLocation>
        <location evidence="1">Cytoplasm</location>
    </subcellularLocation>
</comment>
<comment type="similarity">
    <text evidence="3">Belongs to the SRP19 family.</text>
</comment>
<dbReference type="EMBL" id="CR382138">
    <property type="protein sequence ID" value="CAG89015.1"/>
    <property type="molecule type" value="Genomic_DNA"/>
</dbReference>
<dbReference type="RefSeq" id="XP_460678.1">
    <property type="nucleotide sequence ID" value="XM_460678.1"/>
</dbReference>
<dbReference type="SMR" id="Q6BM93"/>
<dbReference type="FunCoup" id="Q6BM93">
    <property type="interactions" value="85"/>
</dbReference>
<dbReference type="STRING" id="284592.Q6BM93"/>
<dbReference type="GeneID" id="2903262"/>
<dbReference type="KEGG" id="dha:DEHA2F07370g"/>
<dbReference type="VEuPathDB" id="FungiDB:DEHA2F07370g"/>
<dbReference type="eggNOG" id="KOG3198">
    <property type="taxonomic scope" value="Eukaryota"/>
</dbReference>
<dbReference type="HOGENOM" id="CLU_065433_1_1_1"/>
<dbReference type="InParanoid" id="Q6BM93"/>
<dbReference type="OMA" id="IPKVKGF"/>
<dbReference type="OrthoDB" id="2190947at2759"/>
<dbReference type="Proteomes" id="UP000000599">
    <property type="component" value="Chromosome F"/>
</dbReference>
<dbReference type="GO" id="GO:0005786">
    <property type="term" value="C:signal recognition particle, endoplasmic reticulum targeting"/>
    <property type="evidence" value="ECO:0007669"/>
    <property type="project" value="UniProtKB-KW"/>
</dbReference>
<dbReference type="GO" id="GO:0008312">
    <property type="term" value="F:7S RNA binding"/>
    <property type="evidence" value="ECO:0007669"/>
    <property type="project" value="EnsemblFungi"/>
</dbReference>
<dbReference type="GO" id="GO:0006617">
    <property type="term" value="P:SRP-dependent cotranslational protein targeting to membrane, signal sequence recognition"/>
    <property type="evidence" value="ECO:0007669"/>
    <property type="project" value="EnsemblFungi"/>
</dbReference>
<dbReference type="FunFam" id="3.30.56.30:FF:000003">
    <property type="entry name" value="Signal recognition particle SEC65 subunit"/>
    <property type="match status" value="1"/>
</dbReference>
<dbReference type="Gene3D" id="3.30.56.30">
    <property type="entry name" value="Signal recognition particle, SRP19-like subunit"/>
    <property type="match status" value="1"/>
</dbReference>
<dbReference type="InterPro" id="IPR002778">
    <property type="entry name" value="Signal_recog_particle_SRP19"/>
</dbReference>
<dbReference type="InterPro" id="IPR036521">
    <property type="entry name" value="SRP19-like_sf"/>
</dbReference>
<dbReference type="PANTHER" id="PTHR17453">
    <property type="entry name" value="SIGNAL RECOGNITION PARTICLE 19 KD PROTEIN"/>
    <property type="match status" value="1"/>
</dbReference>
<dbReference type="PANTHER" id="PTHR17453:SF0">
    <property type="entry name" value="SIGNAL RECOGNITION PARTICLE 19 KDA PROTEIN"/>
    <property type="match status" value="1"/>
</dbReference>
<dbReference type="Pfam" id="PF01922">
    <property type="entry name" value="SRP19"/>
    <property type="match status" value="1"/>
</dbReference>
<dbReference type="SUPFAM" id="SSF69695">
    <property type="entry name" value="SRP19"/>
    <property type="match status" value="1"/>
</dbReference>
<organism>
    <name type="scientific">Debaryomyces hansenii (strain ATCC 36239 / CBS 767 / BCRC 21394 / JCM 1990 / NBRC 0083 / IGC 2968)</name>
    <name type="common">Yeast</name>
    <name type="synonym">Torulaspora hansenii</name>
    <dbReference type="NCBI Taxonomy" id="284592"/>
    <lineage>
        <taxon>Eukaryota</taxon>
        <taxon>Fungi</taxon>
        <taxon>Dikarya</taxon>
        <taxon>Ascomycota</taxon>
        <taxon>Saccharomycotina</taxon>
        <taxon>Pichiomycetes</taxon>
        <taxon>Debaryomycetaceae</taxon>
        <taxon>Debaryomyces</taxon>
    </lineage>
</organism>
<protein>
    <recommendedName>
        <fullName>Signal recognition particle SEC65 subunit</fullName>
    </recommendedName>
</protein>
<proteinExistence type="inferred from homology"/>
<keyword id="KW-0963">Cytoplasm</keyword>
<keyword id="KW-1185">Reference proteome</keyword>
<keyword id="KW-0687">Ribonucleoprotein</keyword>
<keyword id="KW-0694">RNA-binding</keyword>
<keyword id="KW-0733">Signal recognition particle</keyword>
<feature type="chain" id="PRO_0000135207" description="Signal recognition particle SEC65 subunit">
    <location>
        <begin position="1"/>
        <end position="269"/>
    </location>
</feature>
<feature type="region of interest" description="Disordered" evidence="2">
    <location>
        <begin position="30"/>
        <end position="65"/>
    </location>
</feature>
<feature type="region of interest" description="Disordered" evidence="2">
    <location>
        <begin position="236"/>
        <end position="269"/>
    </location>
</feature>
<feature type="compositionally biased region" description="Low complexity" evidence="2">
    <location>
        <begin position="248"/>
        <end position="258"/>
    </location>
</feature>
<feature type="compositionally biased region" description="Basic residues" evidence="2">
    <location>
        <begin position="259"/>
        <end position="269"/>
    </location>
</feature>
<accession>Q6BM93</accession>
<reference key="1">
    <citation type="journal article" date="2004" name="Nature">
        <title>Genome evolution in yeasts.</title>
        <authorList>
            <person name="Dujon B."/>
            <person name="Sherman D."/>
            <person name="Fischer G."/>
            <person name="Durrens P."/>
            <person name="Casaregola S."/>
            <person name="Lafontaine I."/>
            <person name="de Montigny J."/>
            <person name="Marck C."/>
            <person name="Neuveglise C."/>
            <person name="Talla E."/>
            <person name="Goffard N."/>
            <person name="Frangeul L."/>
            <person name="Aigle M."/>
            <person name="Anthouard V."/>
            <person name="Babour A."/>
            <person name="Barbe V."/>
            <person name="Barnay S."/>
            <person name="Blanchin S."/>
            <person name="Beckerich J.-M."/>
            <person name="Beyne E."/>
            <person name="Bleykasten C."/>
            <person name="Boisrame A."/>
            <person name="Boyer J."/>
            <person name="Cattolico L."/>
            <person name="Confanioleri F."/>
            <person name="de Daruvar A."/>
            <person name="Despons L."/>
            <person name="Fabre E."/>
            <person name="Fairhead C."/>
            <person name="Ferry-Dumazet H."/>
            <person name="Groppi A."/>
            <person name="Hantraye F."/>
            <person name="Hennequin C."/>
            <person name="Jauniaux N."/>
            <person name="Joyet P."/>
            <person name="Kachouri R."/>
            <person name="Kerrest A."/>
            <person name="Koszul R."/>
            <person name="Lemaire M."/>
            <person name="Lesur I."/>
            <person name="Ma L."/>
            <person name="Muller H."/>
            <person name="Nicaud J.-M."/>
            <person name="Nikolski M."/>
            <person name="Oztas S."/>
            <person name="Ozier-Kalogeropoulos O."/>
            <person name="Pellenz S."/>
            <person name="Potier S."/>
            <person name="Richard G.-F."/>
            <person name="Straub M.-L."/>
            <person name="Suleau A."/>
            <person name="Swennen D."/>
            <person name="Tekaia F."/>
            <person name="Wesolowski-Louvel M."/>
            <person name="Westhof E."/>
            <person name="Wirth B."/>
            <person name="Zeniou-Meyer M."/>
            <person name="Zivanovic Y."/>
            <person name="Bolotin-Fukuhara M."/>
            <person name="Thierry A."/>
            <person name="Bouchier C."/>
            <person name="Caudron B."/>
            <person name="Scarpelli C."/>
            <person name="Gaillardin C."/>
            <person name="Weissenbach J."/>
            <person name="Wincker P."/>
            <person name="Souciet J.-L."/>
        </authorList>
    </citation>
    <scope>NUCLEOTIDE SEQUENCE [LARGE SCALE GENOMIC DNA]</scope>
    <source>
        <strain>ATCC 36239 / CBS 767 / BCRC 21394 / JCM 1990 / NBRC 0083 / IGC 2968</strain>
    </source>
</reference>
<gene>
    <name type="primary">SEC65</name>
    <name type="ordered locus">DEHA2F07370g</name>
</gene>